<name>DCUP_CUPNH</name>
<sequence length="363" mass="39663">MTALQNDTFLRALRRQPTEYTPLWLMRQAGRYLPEYNATRARAGSFLGLAKNPAYATEVTLQPLDRYPLDAAILFSDILTVPDAMGLGLSFAQGEGPRFAHPLRTEADVQKLAVPDMASLQYVFDAVSEIRRALVQDGRQRVPLIGFSGSPWTLACYMVEGGGSDDFRTVKAMMYGRPDLMHRILEINAQAVTEYLNAQIEAGAQAVMIFDTWGGALADGMYQAFSLAYMRRVLAGLKREHDGQQVPAIVFTKGGGLWLEALADTGADAIGLDWTVNLAEARRRTGGRVALQGNIDPTVLFAPEAAIREQVRGVLDSYAAAGGSDGHVFNLGHGISQFTPPDNVSVLVDEVHRHSRKLRAGQK</sequence>
<protein>
    <recommendedName>
        <fullName evidence="1">Uroporphyrinogen decarboxylase</fullName>
        <shortName evidence="1">UPD</shortName>
        <shortName evidence="1">URO-D</shortName>
        <ecNumber evidence="1">4.1.1.37</ecNumber>
    </recommendedName>
</protein>
<comment type="function">
    <text evidence="1">Catalyzes the decarboxylation of four acetate groups of uroporphyrinogen-III to yield coproporphyrinogen-III.</text>
</comment>
<comment type="catalytic activity">
    <reaction evidence="1">
        <text>uroporphyrinogen III + 4 H(+) = coproporphyrinogen III + 4 CO2</text>
        <dbReference type="Rhea" id="RHEA:19865"/>
        <dbReference type="ChEBI" id="CHEBI:15378"/>
        <dbReference type="ChEBI" id="CHEBI:16526"/>
        <dbReference type="ChEBI" id="CHEBI:57308"/>
        <dbReference type="ChEBI" id="CHEBI:57309"/>
        <dbReference type="EC" id="4.1.1.37"/>
    </reaction>
</comment>
<comment type="pathway">
    <text evidence="1">Porphyrin-containing compound metabolism; protoporphyrin-IX biosynthesis; coproporphyrinogen-III from 5-aminolevulinate: step 4/4.</text>
</comment>
<comment type="subunit">
    <text evidence="1">Homodimer.</text>
</comment>
<comment type="subcellular location">
    <subcellularLocation>
        <location evidence="1">Cytoplasm</location>
    </subcellularLocation>
</comment>
<comment type="similarity">
    <text evidence="1">Belongs to the uroporphyrinogen decarboxylase family.</text>
</comment>
<comment type="sequence caution" evidence="2">
    <conflict type="erroneous initiation">
        <sequence resource="EMBL-CDS" id="CAJ94690"/>
    </conflict>
</comment>
<organism>
    <name type="scientific">Cupriavidus necator (strain ATCC 17699 / DSM 428 / KCTC 22496 / NCIMB 10442 / H16 / Stanier 337)</name>
    <name type="common">Ralstonia eutropha</name>
    <dbReference type="NCBI Taxonomy" id="381666"/>
    <lineage>
        <taxon>Bacteria</taxon>
        <taxon>Pseudomonadati</taxon>
        <taxon>Pseudomonadota</taxon>
        <taxon>Betaproteobacteria</taxon>
        <taxon>Burkholderiales</taxon>
        <taxon>Burkholderiaceae</taxon>
        <taxon>Cupriavidus</taxon>
    </lineage>
</organism>
<proteinExistence type="inferred from homology"/>
<keyword id="KW-0963">Cytoplasm</keyword>
<keyword id="KW-0210">Decarboxylase</keyword>
<keyword id="KW-0456">Lyase</keyword>
<keyword id="KW-0627">Porphyrin biosynthesis</keyword>
<keyword id="KW-1185">Reference proteome</keyword>
<reference key="1">
    <citation type="journal article" date="2006" name="Nat. Biotechnol.">
        <title>Genome sequence of the bioplastic-producing 'Knallgas' bacterium Ralstonia eutropha H16.</title>
        <authorList>
            <person name="Pohlmann A."/>
            <person name="Fricke W.F."/>
            <person name="Reinecke F."/>
            <person name="Kusian B."/>
            <person name="Liesegang H."/>
            <person name="Cramm R."/>
            <person name="Eitinger T."/>
            <person name="Ewering C."/>
            <person name="Poetter M."/>
            <person name="Schwartz E."/>
            <person name="Strittmatter A."/>
            <person name="Voss I."/>
            <person name="Gottschalk G."/>
            <person name="Steinbuechel A."/>
            <person name="Friedrich B."/>
            <person name="Bowien B."/>
        </authorList>
    </citation>
    <scope>NUCLEOTIDE SEQUENCE [LARGE SCALE GENOMIC DNA]</scope>
    <source>
        <strain>ATCC 17699 / DSM 428 / KCTC 22496 / NCIMB 10442 / H16 / Stanier 337</strain>
    </source>
</reference>
<evidence type="ECO:0000255" key="1">
    <source>
        <dbReference type="HAMAP-Rule" id="MF_00218"/>
    </source>
</evidence>
<evidence type="ECO:0000305" key="2"/>
<dbReference type="EC" id="4.1.1.37" evidence="1"/>
<dbReference type="EMBL" id="AM260479">
    <property type="protein sequence ID" value="CAJ94690.1"/>
    <property type="status" value="ALT_INIT"/>
    <property type="molecule type" value="Genomic_DNA"/>
</dbReference>
<dbReference type="RefSeq" id="WP_010811259.1">
    <property type="nucleotide sequence ID" value="NZ_CP039287.1"/>
</dbReference>
<dbReference type="SMR" id="Q0K5N1"/>
<dbReference type="STRING" id="381666.H16_A3633"/>
<dbReference type="KEGG" id="reh:H16_A3633"/>
<dbReference type="eggNOG" id="COG0407">
    <property type="taxonomic scope" value="Bacteria"/>
</dbReference>
<dbReference type="HOGENOM" id="CLU_040933_0_0_4"/>
<dbReference type="OrthoDB" id="9806656at2"/>
<dbReference type="UniPathway" id="UPA00251">
    <property type="reaction ID" value="UER00321"/>
</dbReference>
<dbReference type="Proteomes" id="UP000008210">
    <property type="component" value="Chromosome 1"/>
</dbReference>
<dbReference type="GO" id="GO:0005829">
    <property type="term" value="C:cytosol"/>
    <property type="evidence" value="ECO:0007669"/>
    <property type="project" value="TreeGrafter"/>
</dbReference>
<dbReference type="GO" id="GO:0004853">
    <property type="term" value="F:uroporphyrinogen decarboxylase activity"/>
    <property type="evidence" value="ECO:0007669"/>
    <property type="project" value="UniProtKB-UniRule"/>
</dbReference>
<dbReference type="GO" id="GO:0019353">
    <property type="term" value="P:protoporphyrinogen IX biosynthetic process from glutamate"/>
    <property type="evidence" value="ECO:0007669"/>
    <property type="project" value="TreeGrafter"/>
</dbReference>
<dbReference type="CDD" id="cd00717">
    <property type="entry name" value="URO-D"/>
    <property type="match status" value="1"/>
</dbReference>
<dbReference type="FunFam" id="3.20.20.210:FF:000001">
    <property type="entry name" value="Uroporphyrinogen decarboxylase"/>
    <property type="match status" value="1"/>
</dbReference>
<dbReference type="Gene3D" id="3.20.20.210">
    <property type="match status" value="1"/>
</dbReference>
<dbReference type="HAMAP" id="MF_00218">
    <property type="entry name" value="URO_D"/>
    <property type="match status" value="1"/>
</dbReference>
<dbReference type="InterPro" id="IPR038071">
    <property type="entry name" value="UROD/MetE-like_sf"/>
</dbReference>
<dbReference type="InterPro" id="IPR006361">
    <property type="entry name" value="Uroporphyrinogen_deCO2ase_HemE"/>
</dbReference>
<dbReference type="InterPro" id="IPR000257">
    <property type="entry name" value="Uroporphyrinogen_deCOase"/>
</dbReference>
<dbReference type="NCBIfam" id="TIGR01464">
    <property type="entry name" value="hemE"/>
    <property type="match status" value="1"/>
</dbReference>
<dbReference type="PANTHER" id="PTHR21091">
    <property type="entry name" value="METHYLTETRAHYDROFOLATE:HOMOCYSTEINE METHYLTRANSFERASE RELATED"/>
    <property type="match status" value="1"/>
</dbReference>
<dbReference type="PANTHER" id="PTHR21091:SF169">
    <property type="entry name" value="UROPORPHYRINOGEN DECARBOXYLASE"/>
    <property type="match status" value="1"/>
</dbReference>
<dbReference type="Pfam" id="PF01208">
    <property type="entry name" value="URO-D"/>
    <property type="match status" value="1"/>
</dbReference>
<dbReference type="SUPFAM" id="SSF51726">
    <property type="entry name" value="UROD/MetE-like"/>
    <property type="match status" value="1"/>
</dbReference>
<dbReference type="PROSITE" id="PS00906">
    <property type="entry name" value="UROD_1"/>
    <property type="match status" value="1"/>
</dbReference>
<dbReference type="PROSITE" id="PS00907">
    <property type="entry name" value="UROD_2"/>
    <property type="match status" value="1"/>
</dbReference>
<accession>Q0K5N1</accession>
<feature type="chain" id="PRO_0000325679" description="Uroporphyrinogen decarboxylase">
    <location>
        <begin position="1"/>
        <end position="363"/>
    </location>
</feature>
<feature type="binding site" evidence="1">
    <location>
        <begin position="27"/>
        <end position="31"/>
    </location>
    <ligand>
        <name>substrate</name>
    </ligand>
</feature>
<feature type="binding site" evidence="1">
    <location>
        <position position="77"/>
    </location>
    <ligand>
        <name>substrate</name>
    </ligand>
</feature>
<feature type="binding site" evidence="1">
    <location>
        <position position="157"/>
    </location>
    <ligand>
        <name>substrate</name>
    </ligand>
</feature>
<feature type="binding site" evidence="1">
    <location>
        <position position="212"/>
    </location>
    <ligand>
        <name>substrate</name>
    </ligand>
</feature>
<feature type="binding site" evidence="1">
    <location>
        <position position="333"/>
    </location>
    <ligand>
        <name>substrate</name>
    </ligand>
</feature>
<feature type="site" description="Transition state stabilizer" evidence="1">
    <location>
        <position position="77"/>
    </location>
</feature>
<gene>
    <name evidence="1" type="primary">hemE</name>
    <name type="ordered locus">H16_A3633</name>
</gene>